<comment type="function">
    <text evidence="1">One of the primary rRNA binding proteins, it binds directly to 16S rRNA where it nucleates assembly of the body of the 30S subunit.</text>
</comment>
<comment type="function">
    <text evidence="1">With S5 and S12 plays an important role in translational accuracy.</text>
</comment>
<comment type="subunit">
    <text evidence="1">Part of the 30S ribosomal subunit. Contacts protein S5. The interaction surface between S4 and S5 is involved in control of translational fidelity (By similarity).</text>
</comment>
<comment type="subcellular location">
    <subcellularLocation>
        <location>Plastid</location>
        <location>Chloroplast</location>
    </subcellularLocation>
</comment>
<comment type="similarity">
    <text evidence="3">Belongs to the universal ribosomal protein uS4 family.</text>
</comment>
<proteinExistence type="inferred from homology"/>
<keyword id="KW-0150">Chloroplast</keyword>
<keyword id="KW-0934">Plastid</keyword>
<keyword id="KW-1185">Reference proteome</keyword>
<keyword id="KW-0687">Ribonucleoprotein</keyword>
<keyword id="KW-0689">Ribosomal protein</keyword>
<keyword id="KW-0694">RNA-binding</keyword>
<keyword id="KW-0699">rRNA-binding</keyword>
<reference key="1">
    <citation type="journal article" date="1999" name="DNA Res.">
        <title>Complete structure of the chloroplast genome of Arabidopsis thaliana.</title>
        <authorList>
            <person name="Sato S."/>
            <person name="Nakamura Y."/>
            <person name="Kaneko T."/>
            <person name="Asamizu E."/>
            <person name="Tabata S."/>
        </authorList>
    </citation>
    <scope>NUCLEOTIDE SEQUENCE [LARGE SCALE GENOMIC DNA]</scope>
    <source>
        <strain>cv. Columbia</strain>
    </source>
</reference>
<reference key="2">
    <citation type="journal article" date="2023" name="Plant Cell">
        <title>An updated nomenclature for plant ribosomal protein genes.</title>
        <authorList>
            <person name="Scarpin M.R."/>
            <person name="Busche M."/>
            <person name="Martinez R.E."/>
            <person name="Harper L.C."/>
            <person name="Reiser L."/>
            <person name="Szakonyi D."/>
            <person name="Merchante C."/>
            <person name="Lan T."/>
            <person name="Xiong W."/>
            <person name="Mo B."/>
            <person name="Tang G."/>
            <person name="Chen X."/>
            <person name="Bailey-Serres J."/>
            <person name="Browning K.S."/>
            <person name="Brunkard J.O."/>
        </authorList>
    </citation>
    <scope>NOMENCLATURE</scope>
</reference>
<feature type="chain" id="PRO_0000132535" description="Small ribosomal subunit protein uS4c">
    <location>
        <begin position="1"/>
        <end position="201"/>
    </location>
</feature>
<feature type="domain" description="S4 RNA-binding">
    <location>
        <begin position="89"/>
        <end position="152"/>
    </location>
</feature>
<name>RR4_ARATH</name>
<dbReference type="EMBL" id="AP000423">
    <property type="protein sequence ID" value="BAA84387.1"/>
    <property type="molecule type" value="Genomic_DNA"/>
</dbReference>
<dbReference type="RefSeq" id="NP_051061.1">
    <property type="nucleotide sequence ID" value="NC_000932.1"/>
</dbReference>
<dbReference type="SMR" id="P56799"/>
<dbReference type="BioGRID" id="29966">
    <property type="interactions" value="13"/>
</dbReference>
<dbReference type="FunCoup" id="P56799">
    <property type="interactions" value="228"/>
</dbReference>
<dbReference type="STRING" id="3702.P56799"/>
<dbReference type="PaxDb" id="3702-ATCG00380.1"/>
<dbReference type="ProteomicsDB" id="228247"/>
<dbReference type="EnsemblPlants" id="ATCG00380.1">
    <property type="protein sequence ID" value="ATCG00380.1"/>
    <property type="gene ID" value="ATCG00380"/>
</dbReference>
<dbReference type="GeneID" id="844765"/>
<dbReference type="Gramene" id="ATCG00380.1">
    <property type="protein sequence ID" value="ATCG00380.1"/>
    <property type="gene ID" value="ATCG00380"/>
</dbReference>
<dbReference type="KEGG" id="ath:ArthCp024"/>
<dbReference type="Araport" id="ATCG00380"/>
<dbReference type="TAIR" id="ATCG00380">
    <property type="gene designation" value="RPS4"/>
</dbReference>
<dbReference type="eggNOG" id="KOG3301">
    <property type="taxonomic scope" value="Eukaryota"/>
</dbReference>
<dbReference type="HOGENOM" id="CLU_092403_0_5_1"/>
<dbReference type="InParanoid" id="P56799"/>
<dbReference type="OMA" id="QLVVELY"/>
<dbReference type="PRO" id="PR:P56799"/>
<dbReference type="Proteomes" id="UP000006548">
    <property type="component" value="Chloroplast Pltd"/>
</dbReference>
<dbReference type="ExpressionAtlas" id="P56799">
    <property type="expression patterns" value="baseline and differential"/>
</dbReference>
<dbReference type="GO" id="GO:0009507">
    <property type="term" value="C:chloroplast"/>
    <property type="evidence" value="ECO:0007005"/>
    <property type="project" value="TAIR"/>
</dbReference>
<dbReference type="GO" id="GO:0009570">
    <property type="term" value="C:chloroplast stroma"/>
    <property type="evidence" value="ECO:0007005"/>
    <property type="project" value="TAIR"/>
</dbReference>
<dbReference type="GO" id="GO:0009536">
    <property type="term" value="C:plastid"/>
    <property type="evidence" value="ECO:0007005"/>
    <property type="project" value="TAIR"/>
</dbReference>
<dbReference type="GO" id="GO:0015935">
    <property type="term" value="C:small ribosomal subunit"/>
    <property type="evidence" value="ECO:0007669"/>
    <property type="project" value="InterPro"/>
</dbReference>
<dbReference type="GO" id="GO:0003729">
    <property type="term" value="F:mRNA binding"/>
    <property type="evidence" value="ECO:0000314"/>
    <property type="project" value="TAIR"/>
</dbReference>
<dbReference type="GO" id="GO:0019843">
    <property type="term" value="F:rRNA binding"/>
    <property type="evidence" value="ECO:0007669"/>
    <property type="project" value="UniProtKB-UniRule"/>
</dbReference>
<dbReference type="GO" id="GO:0003735">
    <property type="term" value="F:structural constituent of ribosome"/>
    <property type="evidence" value="ECO:0007669"/>
    <property type="project" value="InterPro"/>
</dbReference>
<dbReference type="GO" id="GO:0006412">
    <property type="term" value="P:translation"/>
    <property type="evidence" value="ECO:0007669"/>
    <property type="project" value="UniProtKB-UniRule"/>
</dbReference>
<dbReference type="CDD" id="cd00165">
    <property type="entry name" value="S4"/>
    <property type="match status" value="1"/>
</dbReference>
<dbReference type="FunFam" id="1.10.1050.10:FF:000002">
    <property type="entry name" value="30S ribosomal protein S4, chloroplastic"/>
    <property type="match status" value="1"/>
</dbReference>
<dbReference type="FunFam" id="3.10.290.10:FF:000081">
    <property type="entry name" value="30S ribosomal protein S4, chloroplastic"/>
    <property type="match status" value="1"/>
</dbReference>
<dbReference type="Gene3D" id="1.10.1050.10">
    <property type="entry name" value="Ribosomal Protein S4 Delta 41, Chain A, domain 1"/>
    <property type="match status" value="1"/>
</dbReference>
<dbReference type="Gene3D" id="3.10.290.10">
    <property type="entry name" value="RNA-binding S4 domain"/>
    <property type="match status" value="1"/>
</dbReference>
<dbReference type="HAMAP" id="MF_01306_B">
    <property type="entry name" value="Ribosomal_uS4_B"/>
    <property type="match status" value="1"/>
</dbReference>
<dbReference type="InterPro" id="IPR022801">
    <property type="entry name" value="Ribosomal_uS4"/>
</dbReference>
<dbReference type="InterPro" id="IPR005709">
    <property type="entry name" value="Ribosomal_uS4_bac-type"/>
</dbReference>
<dbReference type="InterPro" id="IPR018079">
    <property type="entry name" value="Ribosomal_uS4_CS"/>
</dbReference>
<dbReference type="InterPro" id="IPR001912">
    <property type="entry name" value="Ribosomal_uS4_N"/>
</dbReference>
<dbReference type="InterPro" id="IPR002942">
    <property type="entry name" value="S4_RNA-bd"/>
</dbReference>
<dbReference type="InterPro" id="IPR036986">
    <property type="entry name" value="S4_RNA-bd_sf"/>
</dbReference>
<dbReference type="NCBIfam" id="NF003717">
    <property type="entry name" value="PRK05327.1"/>
    <property type="match status" value="1"/>
</dbReference>
<dbReference type="NCBIfam" id="TIGR01017">
    <property type="entry name" value="rpsD_bact"/>
    <property type="match status" value="1"/>
</dbReference>
<dbReference type="PANTHER" id="PTHR11831">
    <property type="entry name" value="30S 40S RIBOSOMAL PROTEIN"/>
    <property type="match status" value="1"/>
</dbReference>
<dbReference type="PANTHER" id="PTHR11831:SF4">
    <property type="entry name" value="SMALL RIBOSOMAL SUBUNIT PROTEIN US4M"/>
    <property type="match status" value="1"/>
</dbReference>
<dbReference type="Pfam" id="PF00163">
    <property type="entry name" value="Ribosomal_S4"/>
    <property type="match status" value="1"/>
</dbReference>
<dbReference type="Pfam" id="PF01479">
    <property type="entry name" value="S4"/>
    <property type="match status" value="1"/>
</dbReference>
<dbReference type="SMART" id="SM01390">
    <property type="entry name" value="Ribosomal_S4"/>
    <property type="match status" value="1"/>
</dbReference>
<dbReference type="SMART" id="SM00363">
    <property type="entry name" value="S4"/>
    <property type="match status" value="1"/>
</dbReference>
<dbReference type="SUPFAM" id="SSF55174">
    <property type="entry name" value="Alpha-L RNA-binding motif"/>
    <property type="match status" value="1"/>
</dbReference>
<dbReference type="PROSITE" id="PS00632">
    <property type="entry name" value="RIBOSOMAL_S4"/>
    <property type="match status" value="1"/>
</dbReference>
<dbReference type="PROSITE" id="PS50889">
    <property type="entry name" value="S4"/>
    <property type="match status" value="1"/>
</dbReference>
<organism>
    <name type="scientific">Arabidopsis thaliana</name>
    <name type="common">Mouse-ear cress</name>
    <dbReference type="NCBI Taxonomy" id="3702"/>
    <lineage>
        <taxon>Eukaryota</taxon>
        <taxon>Viridiplantae</taxon>
        <taxon>Streptophyta</taxon>
        <taxon>Embryophyta</taxon>
        <taxon>Tracheophyta</taxon>
        <taxon>Spermatophyta</taxon>
        <taxon>Magnoliopsida</taxon>
        <taxon>eudicotyledons</taxon>
        <taxon>Gunneridae</taxon>
        <taxon>Pentapetalae</taxon>
        <taxon>rosids</taxon>
        <taxon>malvids</taxon>
        <taxon>Brassicales</taxon>
        <taxon>Brassicaceae</taxon>
        <taxon>Camelineae</taxon>
        <taxon>Arabidopsis</taxon>
    </lineage>
</organism>
<geneLocation type="chloroplast"/>
<evidence type="ECO:0000250" key="1"/>
<evidence type="ECO:0000303" key="2">
    <source>
    </source>
</evidence>
<evidence type="ECO:0000305" key="3"/>
<sequence length="201" mass="23240">MSRYRGPRFKKIRRLGALPGLTSKRPKAGSDLRNQSRSVKKSQYRIRLEEKQKLRFHYGLTEHQLLKYVRIAGKAKGSTGQVLLQLLEMRLDNILFRLGMALTIPQARQLVNHGHILVNGRIVDIPSYRCKPRDIITVKDEQNSRTLVQNLLDSSAPEELPNHLTLHTFQYEGLVNQIIDRKCVGLKINELLVVEYYSRQT</sequence>
<protein>
    <recommendedName>
        <fullName evidence="2">Small ribosomal subunit protein uS4c</fullName>
    </recommendedName>
    <alternativeName>
        <fullName>30S ribosomal protein S4, chloroplastic</fullName>
    </alternativeName>
</protein>
<accession>P56799</accession>
<gene>
    <name type="primary">rps4</name>
    <name type="ordered locus">AtCg00380</name>
</gene>